<name>NADD_NEIMA</name>
<feature type="chain" id="PRO_0000181429" description="Probable nicotinate-nucleotide adenylyltransferase">
    <location>
        <begin position="1"/>
        <end position="197"/>
    </location>
</feature>
<keyword id="KW-0067">ATP-binding</keyword>
<keyword id="KW-0520">NAD</keyword>
<keyword id="KW-0547">Nucleotide-binding</keyword>
<keyword id="KW-0548">Nucleotidyltransferase</keyword>
<keyword id="KW-0662">Pyridine nucleotide biosynthesis</keyword>
<keyword id="KW-0808">Transferase</keyword>
<gene>
    <name type="primary">nadD</name>
    <name type="ordered locus">NMA0416</name>
</gene>
<accession>P57089</accession>
<accession>A1IPN3</accession>
<evidence type="ECO:0000250" key="1"/>
<evidence type="ECO:0000305" key="2"/>
<protein>
    <recommendedName>
        <fullName>Probable nicotinate-nucleotide adenylyltransferase</fullName>
        <ecNumber>2.7.7.18</ecNumber>
    </recommendedName>
    <alternativeName>
        <fullName>Deamido-NAD(+) diphosphorylase</fullName>
    </alternativeName>
    <alternativeName>
        <fullName>Deamido-NAD(+) pyrophosphorylase</fullName>
    </alternativeName>
    <alternativeName>
        <fullName>Nicotinate mononucleotide adenylyltransferase</fullName>
        <shortName>NaMN adenylyltransferase</shortName>
    </alternativeName>
</protein>
<comment type="function">
    <text evidence="1">Catalyzes the reversible adenylation of nicotinate mononucleotide (NaMN) to nicotinic acid adenine dinucleotide (NaAD).</text>
</comment>
<comment type="catalytic activity">
    <reaction>
        <text>nicotinate beta-D-ribonucleotide + ATP + H(+) = deamido-NAD(+) + diphosphate</text>
        <dbReference type="Rhea" id="RHEA:22860"/>
        <dbReference type="ChEBI" id="CHEBI:15378"/>
        <dbReference type="ChEBI" id="CHEBI:30616"/>
        <dbReference type="ChEBI" id="CHEBI:33019"/>
        <dbReference type="ChEBI" id="CHEBI:57502"/>
        <dbReference type="ChEBI" id="CHEBI:58437"/>
        <dbReference type="EC" id="2.7.7.18"/>
    </reaction>
</comment>
<comment type="pathway">
    <text>Cofactor biosynthesis; NAD(+) biosynthesis; deamido-NAD(+) from nicotinate D-ribonucleotide: step 1/1.</text>
</comment>
<comment type="similarity">
    <text evidence="2">Belongs to the NadD family.</text>
</comment>
<sequence length="197" mass="21857">MKKIGLFGGTFDPIHNGHLHIARAFADEIGLDAVVFLPTGGPYHKDAASASAADRLAMVELATAEDARFAVSDCDIVREGATYTFDTVQIFRQQFPSAQLWWLMGSDSLMKLHTWKKWQMLVRETNIAVAMRQGDSLHQTPRELHAWLGKSLQDGSVRILSAPMHNVSSTEIRRAGVSDGIPPAAARYIREHGLYEK</sequence>
<dbReference type="EC" id="2.7.7.18"/>
<dbReference type="EMBL" id="AL157959">
    <property type="protein sequence ID" value="CAM07704.1"/>
    <property type="molecule type" value="Genomic_DNA"/>
</dbReference>
<dbReference type="PIR" id="C81958">
    <property type="entry name" value="C81958"/>
</dbReference>
<dbReference type="RefSeq" id="WP_002247196.1">
    <property type="nucleotide sequence ID" value="NC_003116.1"/>
</dbReference>
<dbReference type="SMR" id="P57089"/>
<dbReference type="EnsemblBacteria" id="CAM07704">
    <property type="protein sequence ID" value="CAM07704"/>
    <property type="gene ID" value="NMA0416"/>
</dbReference>
<dbReference type="KEGG" id="nma:NMA0416"/>
<dbReference type="HOGENOM" id="CLU_069765_0_0_4"/>
<dbReference type="UniPathway" id="UPA00253">
    <property type="reaction ID" value="UER00332"/>
</dbReference>
<dbReference type="Proteomes" id="UP000000626">
    <property type="component" value="Chromosome"/>
</dbReference>
<dbReference type="GO" id="GO:0005524">
    <property type="term" value="F:ATP binding"/>
    <property type="evidence" value="ECO:0007669"/>
    <property type="project" value="UniProtKB-KW"/>
</dbReference>
<dbReference type="GO" id="GO:0004515">
    <property type="term" value="F:nicotinate-nucleotide adenylyltransferase activity"/>
    <property type="evidence" value="ECO:0007669"/>
    <property type="project" value="UniProtKB-UniRule"/>
</dbReference>
<dbReference type="GO" id="GO:0009435">
    <property type="term" value="P:NAD biosynthetic process"/>
    <property type="evidence" value="ECO:0007669"/>
    <property type="project" value="UniProtKB-UniRule"/>
</dbReference>
<dbReference type="CDD" id="cd02165">
    <property type="entry name" value="NMNAT"/>
    <property type="match status" value="1"/>
</dbReference>
<dbReference type="FunFam" id="3.40.50.620:FF:000254">
    <property type="entry name" value="Probable nicotinate-nucleotide adenylyltransferase"/>
    <property type="match status" value="1"/>
</dbReference>
<dbReference type="Gene3D" id="3.40.50.620">
    <property type="entry name" value="HUPs"/>
    <property type="match status" value="1"/>
</dbReference>
<dbReference type="HAMAP" id="MF_00244">
    <property type="entry name" value="NaMN_adenylyltr"/>
    <property type="match status" value="1"/>
</dbReference>
<dbReference type="InterPro" id="IPR004821">
    <property type="entry name" value="Cyt_trans-like"/>
</dbReference>
<dbReference type="InterPro" id="IPR005248">
    <property type="entry name" value="NadD/NMNAT"/>
</dbReference>
<dbReference type="InterPro" id="IPR014729">
    <property type="entry name" value="Rossmann-like_a/b/a_fold"/>
</dbReference>
<dbReference type="NCBIfam" id="TIGR00125">
    <property type="entry name" value="cyt_tran_rel"/>
    <property type="match status" value="1"/>
</dbReference>
<dbReference type="NCBIfam" id="TIGR00482">
    <property type="entry name" value="nicotinate (nicotinamide) nucleotide adenylyltransferase"/>
    <property type="match status" value="1"/>
</dbReference>
<dbReference type="NCBIfam" id="NF000840">
    <property type="entry name" value="PRK00071.1-3"/>
    <property type="match status" value="1"/>
</dbReference>
<dbReference type="PANTHER" id="PTHR39321">
    <property type="entry name" value="NICOTINATE-NUCLEOTIDE ADENYLYLTRANSFERASE-RELATED"/>
    <property type="match status" value="1"/>
</dbReference>
<dbReference type="PANTHER" id="PTHR39321:SF3">
    <property type="entry name" value="PHOSPHOPANTETHEINE ADENYLYLTRANSFERASE"/>
    <property type="match status" value="1"/>
</dbReference>
<dbReference type="Pfam" id="PF01467">
    <property type="entry name" value="CTP_transf_like"/>
    <property type="match status" value="1"/>
</dbReference>
<dbReference type="SUPFAM" id="SSF52374">
    <property type="entry name" value="Nucleotidylyl transferase"/>
    <property type="match status" value="1"/>
</dbReference>
<proteinExistence type="inferred from homology"/>
<reference key="1">
    <citation type="journal article" date="2000" name="Nature">
        <title>Complete DNA sequence of a serogroup A strain of Neisseria meningitidis Z2491.</title>
        <authorList>
            <person name="Parkhill J."/>
            <person name="Achtman M."/>
            <person name="James K.D."/>
            <person name="Bentley S.D."/>
            <person name="Churcher C.M."/>
            <person name="Klee S.R."/>
            <person name="Morelli G."/>
            <person name="Basham D."/>
            <person name="Brown D."/>
            <person name="Chillingworth T."/>
            <person name="Davies R.M."/>
            <person name="Davis P."/>
            <person name="Devlin K."/>
            <person name="Feltwell T."/>
            <person name="Hamlin N."/>
            <person name="Holroyd S."/>
            <person name="Jagels K."/>
            <person name="Leather S."/>
            <person name="Moule S."/>
            <person name="Mungall K.L."/>
            <person name="Quail M.A."/>
            <person name="Rajandream M.A."/>
            <person name="Rutherford K.M."/>
            <person name="Simmonds M."/>
            <person name="Skelton J."/>
            <person name="Whitehead S."/>
            <person name="Spratt B.G."/>
            <person name="Barrell B.G."/>
        </authorList>
    </citation>
    <scope>NUCLEOTIDE SEQUENCE [LARGE SCALE GENOMIC DNA]</scope>
    <source>
        <strain>DSM 15465 / Z2491</strain>
    </source>
</reference>
<organism>
    <name type="scientific">Neisseria meningitidis serogroup A / serotype 4A (strain DSM 15465 / Z2491)</name>
    <dbReference type="NCBI Taxonomy" id="122587"/>
    <lineage>
        <taxon>Bacteria</taxon>
        <taxon>Pseudomonadati</taxon>
        <taxon>Pseudomonadota</taxon>
        <taxon>Betaproteobacteria</taxon>
        <taxon>Neisseriales</taxon>
        <taxon>Neisseriaceae</taxon>
        <taxon>Neisseria</taxon>
    </lineage>
</organism>